<gene>
    <name evidence="1" type="primary">hisE</name>
    <name type="ordered locus">BCAH820_1503</name>
</gene>
<dbReference type="EC" id="3.6.1.31" evidence="1"/>
<dbReference type="EMBL" id="CP001283">
    <property type="protein sequence ID" value="ACK91892.1"/>
    <property type="molecule type" value="Genomic_DNA"/>
</dbReference>
<dbReference type="SMR" id="B7JFZ7"/>
<dbReference type="KEGG" id="bcu:BCAH820_1503"/>
<dbReference type="HOGENOM" id="CLU_123337_0_0_9"/>
<dbReference type="UniPathway" id="UPA00031">
    <property type="reaction ID" value="UER00007"/>
</dbReference>
<dbReference type="Proteomes" id="UP000001363">
    <property type="component" value="Chromosome"/>
</dbReference>
<dbReference type="GO" id="GO:0005737">
    <property type="term" value="C:cytoplasm"/>
    <property type="evidence" value="ECO:0007669"/>
    <property type="project" value="UniProtKB-SubCell"/>
</dbReference>
<dbReference type="GO" id="GO:0005524">
    <property type="term" value="F:ATP binding"/>
    <property type="evidence" value="ECO:0007669"/>
    <property type="project" value="UniProtKB-KW"/>
</dbReference>
<dbReference type="GO" id="GO:0004636">
    <property type="term" value="F:phosphoribosyl-ATP diphosphatase activity"/>
    <property type="evidence" value="ECO:0007669"/>
    <property type="project" value="UniProtKB-UniRule"/>
</dbReference>
<dbReference type="GO" id="GO:0000105">
    <property type="term" value="P:L-histidine biosynthetic process"/>
    <property type="evidence" value="ECO:0007669"/>
    <property type="project" value="UniProtKB-UniRule"/>
</dbReference>
<dbReference type="CDD" id="cd11534">
    <property type="entry name" value="NTP-PPase_HisIE_like"/>
    <property type="match status" value="1"/>
</dbReference>
<dbReference type="Gene3D" id="1.10.287.1080">
    <property type="entry name" value="MazG-like"/>
    <property type="match status" value="1"/>
</dbReference>
<dbReference type="HAMAP" id="MF_01020">
    <property type="entry name" value="HisE"/>
    <property type="match status" value="1"/>
</dbReference>
<dbReference type="InterPro" id="IPR008179">
    <property type="entry name" value="HisE"/>
</dbReference>
<dbReference type="InterPro" id="IPR021130">
    <property type="entry name" value="PRib-ATP_PPHydrolase-like"/>
</dbReference>
<dbReference type="NCBIfam" id="TIGR03188">
    <property type="entry name" value="histidine_hisI"/>
    <property type="match status" value="1"/>
</dbReference>
<dbReference type="NCBIfam" id="NF001611">
    <property type="entry name" value="PRK00400.1-3"/>
    <property type="match status" value="1"/>
</dbReference>
<dbReference type="PANTHER" id="PTHR42945">
    <property type="entry name" value="HISTIDINE BIOSYNTHESIS BIFUNCTIONAL PROTEIN"/>
    <property type="match status" value="1"/>
</dbReference>
<dbReference type="PANTHER" id="PTHR42945:SF9">
    <property type="entry name" value="HISTIDINE BIOSYNTHESIS BIFUNCTIONAL PROTEIN HISIE"/>
    <property type="match status" value="1"/>
</dbReference>
<dbReference type="Pfam" id="PF01503">
    <property type="entry name" value="PRA-PH"/>
    <property type="match status" value="1"/>
</dbReference>
<dbReference type="SUPFAM" id="SSF101386">
    <property type="entry name" value="all-alpha NTP pyrophosphatases"/>
    <property type="match status" value="1"/>
</dbReference>
<reference key="1">
    <citation type="submission" date="2008-10" db="EMBL/GenBank/DDBJ databases">
        <title>Genome sequence of Bacillus cereus AH820.</title>
        <authorList>
            <person name="Dodson R.J."/>
            <person name="Durkin A.S."/>
            <person name="Rosovitz M.J."/>
            <person name="Rasko D.A."/>
            <person name="Hoffmaster A."/>
            <person name="Ravel J."/>
            <person name="Sutton G."/>
        </authorList>
    </citation>
    <scope>NUCLEOTIDE SEQUENCE [LARGE SCALE GENOMIC DNA]</scope>
    <source>
        <strain>AH820</strain>
    </source>
</reference>
<comment type="catalytic activity">
    <reaction evidence="1">
        <text>1-(5-phospho-beta-D-ribosyl)-ATP + H2O = 1-(5-phospho-beta-D-ribosyl)-5'-AMP + diphosphate + H(+)</text>
        <dbReference type="Rhea" id="RHEA:22828"/>
        <dbReference type="ChEBI" id="CHEBI:15377"/>
        <dbReference type="ChEBI" id="CHEBI:15378"/>
        <dbReference type="ChEBI" id="CHEBI:33019"/>
        <dbReference type="ChEBI" id="CHEBI:59457"/>
        <dbReference type="ChEBI" id="CHEBI:73183"/>
        <dbReference type="EC" id="3.6.1.31"/>
    </reaction>
</comment>
<comment type="pathway">
    <text evidence="1">Amino-acid biosynthesis; L-histidine biosynthesis; L-histidine from 5-phospho-alpha-D-ribose 1-diphosphate: step 2/9.</text>
</comment>
<comment type="subcellular location">
    <subcellularLocation>
        <location evidence="1">Cytoplasm</location>
    </subcellularLocation>
</comment>
<comment type="similarity">
    <text evidence="1">Belongs to the PRA-PH family.</text>
</comment>
<accession>B7JFZ7</accession>
<proteinExistence type="inferred from homology"/>
<organism>
    <name type="scientific">Bacillus cereus (strain AH820)</name>
    <dbReference type="NCBI Taxonomy" id="405535"/>
    <lineage>
        <taxon>Bacteria</taxon>
        <taxon>Bacillati</taxon>
        <taxon>Bacillota</taxon>
        <taxon>Bacilli</taxon>
        <taxon>Bacillales</taxon>
        <taxon>Bacillaceae</taxon>
        <taxon>Bacillus</taxon>
        <taxon>Bacillus cereus group</taxon>
    </lineage>
</organism>
<sequence length="107" mass="12567">MENTFKLLFETIEERKRNPLPESYTNYLFSKGEDKILKKIGEECTEVIIASKNNDKEELVKEMVDVLYHCFVLLAEKNIPLEDIMEEVTERNGKLSRVGDRREIDTL</sequence>
<feature type="chain" id="PRO_1000135297" description="Phosphoribosyl-ATP pyrophosphatase">
    <location>
        <begin position="1"/>
        <end position="107"/>
    </location>
</feature>
<keyword id="KW-0028">Amino-acid biosynthesis</keyword>
<keyword id="KW-0067">ATP-binding</keyword>
<keyword id="KW-0963">Cytoplasm</keyword>
<keyword id="KW-0368">Histidine biosynthesis</keyword>
<keyword id="KW-0378">Hydrolase</keyword>
<keyword id="KW-0547">Nucleotide-binding</keyword>
<protein>
    <recommendedName>
        <fullName evidence="1">Phosphoribosyl-ATP pyrophosphatase</fullName>
        <shortName evidence="1">PRA-PH</shortName>
        <ecNumber evidence="1">3.6.1.31</ecNumber>
    </recommendedName>
</protein>
<evidence type="ECO:0000255" key="1">
    <source>
        <dbReference type="HAMAP-Rule" id="MF_01020"/>
    </source>
</evidence>
<name>HIS2_BACC0</name>